<feature type="chain" id="PRO_0000116886" description="Uncharacterized protein C297.06c">
    <location>
        <begin position="1"/>
        <end position="230"/>
    </location>
</feature>
<feature type="region of interest" description="Disordered" evidence="1">
    <location>
        <begin position="118"/>
        <end position="195"/>
    </location>
</feature>
<feature type="compositionally biased region" description="Basic residues" evidence="1">
    <location>
        <begin position="136"/>
        <end position="146"/>
    </location>
</feature>
<feature type="compositionally biased region" description="Basic and acidic residues" evidence="1">
    <location>
        <begin position="160"/>
        <end position="170"/>
    </location>
</feature>
<feature type="compositionally biased region" description="Basic and acidic residues" evidence="1">
    <location>
        <begin position="179"/>
        <end position="195"/>
    </location>
</feature>
<dbReference type="EMBL" id="CU329672">
    <property type="protein sequence ID" value="CAB40786.2"/>
    <property type="molecule type" value="Genomic_DNA"/>
</dbReference>
<dbReference type="PIR" id="T41574">
    <property type="entry name" value="T41574"/>
</dbReference>
<dbReference type="RefSeq" id="NP_588363.2">
    <property type="nucleotide sequence ID" value="NM_001023354.2"/>
</dbReference>
<dbReference type="SMR" id="Q9UUN3"/>
<dbReference type="STRING" id="284812.Q9UUN3"/>
<dbReference type="iPTMnet" id="Q9UUN3"/>
<dbReference type="PaxDb" id="4896-SPCC297.06c.1"/>
<dbReference type="EnsemblFungi" id="SPCC297.06c.1">
    <property type="protein sequence ID" value="SPCC297.06c.1:pep"/>
    <property type="gene ID" value="SPCC297.06c"/>
</dbReference>
<dbReference type="KEGG" id="spo:2539229"/>
<dbReference type="PomBase" id="SPCC297.06c"/>
<dbReference type="VEuPathDB" id="FungiDB:SPCC297.06c"/>
<dbReference type="HOGENOM" id="CLU_1205360_0_0_1"/>
<dbReference type="InParanoid" id="Q9UUN3"/>
<dbReference type="OMA" id="RWNDGKM"/>
<dbReference type="PhylomeDB" id="Q9UUN3"/>
<dbReference type="PRO" id="PR:Q9UUN3"/>
<dbReference type="Proteomes" id="UP000002485">
    <property type="component" value="Chromosome III"/>
</dbReference>
<dbReference type="GO" id="GO:0005634">
    <property type="term" value="C:nucleus"/>
    <property type="evidence" value="ECO:0007005"/>
    <property type="project" value="PomBase"/>
</dbReference>
<dbReference type="InterPro" id="IPR044688">
    <property type="entry name" value="SCI-1-like"/>
</dbReference>
<dbReference type="PANTHER" id="PTHR34117">
    <property type="entry name" value="STYLE CELL-CYCLE INHIBITOR 1"/>
    <property type="match status" value="1"/>
</dbReference>
<dbReference type="PANTHER" id="PTHR34117:SF1">
    <property type="entry name" value="STYLE CELL-CYCLE INHIBITOR 1"/>
    <property type="match status" value="1"/>
</dbReference>
<organism>
    <name type="scientific">Schizosaccharomyces pombe (strain 972 / ATCC 24843)</name>
    <name type="common">Fission yeast</name>
    <dbReference type="NCBI Taxonomy" id="284812"/>
    <lineage>
        <taxon>Eukaryota</taxon>
        <taxon>Fungi</taxon>
        <taxon>Dikarya</taxon>
        <taxon>Ascomycota</taxon>
        <taxon>Taphrinomycotina</taxon>
        <taxon>Schizosaccharomycetes</taxon>
        <taxon>Schizosaccharomycetales</taxon>
        <taxon>Schizosaccharomycetaceae</taxon>
        <taxon>Schizosaccharomyces</taxon>
    </lineage>
</organism>
<evidence type="ECO:0000256" key="1">
    <source>
        <dbReference type="SAM" id="MobiDB-lite"/>
    </source>
</evidence>
<sequence length="230" mass="27632">MQGKINYKDITQKEMFNEIFKEYVKEEKQIDLGTCDQDSVHDLWRRFVKRWNDGKMKSKWYSLGKRISQPSYARLVGPSRPTLENLQDRRELQEQLNELRKLSRKSAFKSQAKRETELLDEILPKEPAGSKEAMQQKKKEKRAALKHYREASDNEEDLKETDLYGDRDSFQSRLKQKKQRSEFRASKREMERLERDQELRNKIEERNKKELETIEKLRELAKARLQGFSS</sequence>
<accession>Q9UUN3</accession>
<accession>O74532</accession>
<protein>
    <recommendedName>
        <fullName>Uncharacterized protein C297.06c</fullName>
    </recommendedName>
</protein>
<name>YQ86_SCHPO</name>
<gene>
    <name type="ORF">SPCC297.06c</name>
    <name type="ORF">SPCC737.01c</name>
</gene>
<proteinExistence type="predicted"/>
<reference key="1">
    <citation type="journal article" date="2002" name="Nature">
        <title>The genome sequence of Schizosaccharomyces pombe.</title>
        <authorList>
            <person name="Wood V."/>
            <person name="Gwilliam R."/>
            <person name="Rajandream M.A."/>
            <person name="Lyne M.H."/>
            <person name="Lyne R."/>
            <person name="Stewart A."/>
            <person name="Sgouros J.G."/>
            <person name="Peat N."/>
            <person name="Hayles J."/>
            <person name="Baker S.G."/>
            <person name="Basham D."/>
            <person name="Bowman S."/>
            <person name="Brooks K."/>
            <person name="Brown D."/>
            <person name="Brown S."/>
            <person name="Chillingworth T."/>
            <person name="Churcher C.M."/>
            <person name="Collins M."/>
            <person name="Connor R."/>
            <person name="Cronin A."/>
            <person name="Davis P."/>
            <person name="Feltwell T."/>
            <person name="Fraser A."/>
            <person name="Gentles S."/>
            <person name="Goble A."/>
            <person name="Hamlin N."/>
            <person name="Harris D.E."/>
            <person name="Hidalgo J."/>
            <person name="Hodgson G."/>
            <person name="Holroyd S."/>
            <person name="Hornsby T."/>
            <person name="Howarth S."/>
            <person name="Huckle E.J."/>
            <person name="Hunt S."/>
            <person name="Jagels K."/>
            <person name="James K.D."/>
            <person name="Jones L."/>
            <person name="Jones M."/>
            <person name="Leather S."/>
            <person name="McDonald S."/>
            <person name="McLean J."/>
            <person name="Mooney P."/>
            <person name="Moule S."/>
            <person name="Mungall K.L."/>
            <person name="Murphy L.D."/>
            <person name="Niblett D."/>
            <person name="Odell C."/>
            <person name="Oliver K."/>
            <person name="O'Neil S."/>
            <person name="Pearson D."/>
            <person name="Quail M.A."/>
            <person name="Rabbinowitsch E."/>
            <person name="Rutherford K.M."/>
            <person name="Rutter S."/>
            <person name="Saunders D."/>
            <person name="Seeger K."/>
            <person name="Sharp S."/>
            <person name="Skelton J."/>
            <person name="Simmonds M.N."/>
            <person name="Squares R."/>
            <person name="Squares S."/>
            <person name="Stevens K."/>
            <person name="Taylor K."/>
            <person name="Taylor R.G."/>
            <person name="Tivey A."/>
            <person name="Walsh S.V."/>
            <person name="Warren T."/>
            <person name="Whitehead S."/>
            <person name="Woodward J.R."/>
            <person name="Volckaert G."/>
            <person name="Aert R."/>
            <person name="Robben J."/>
            <person name="Grymonprez B."/>
            <person name="Weltjens I."/>
            <person name="Vanstreels E."/>
            <person name="Rieger M."/>
            <person name="Schaefer M."/>
            <person name="Mueller-Auer S."/>
            <person name="Gabel C."/>
            <person name="Fuchs M."/>
            <person name="Duesterhoeft A."/>
            <person name="Fritzc C."/>
            <person name="Holzer E."/>
            <person name="Moestl D."/>
            <person name="Hilbert H."/>
            <person name="Borzym K."/>
            <person name="Langer I."/>
            <person name="Beck A."/>
            <person name="Lehrach H."/>
            <person name="Reinhardt R."/>
            <person name="Pohl T.M."/>
            <person name="Eger P."/>
            <person name="Zimmermann W."/>
            <person name="Wedler H."/>
            <person name="Wambutt R."/>
            <person name="Purnelle B."/>
            <person name="Goffeau A."/>
            <person name="Cadieu E."/>
            <person name="Dreano S."/>
            <person name="Gloux S."/>
            <person name="Lelaure V."/>
            <person name="Mottier S."/>
            <person name="Galibert F."/>
            <person name="Aves S.J."/>
            <person name="Xiang Z."/>
            <person name="Hunt C."/>
            <person name="Moore K."/>
            <person name="Hurst S.M."/>
            <person name="Lucas M."/>
            <person name="Rochet M."/>
            <person name="Gaillardin C."/>
            <person name="Tallada V.A."/>
            <person name="Garzon A."/>
            <person name="Thode G."/>
            <person name="Daga R.R."/>
            <person name="Cruzado L."/>
            <person name="Jimenez J."/>
            <person name="Sanchez M."/>
            <person name="del Rey F."/>
            <person name="Benito J."/>
            <person name="Dominguez A."/>
            <person name="Revuelta J.L."/>
            <person name="Moreno S."/>
            <person name="Armstrong J."/>
            <person name="Forsburg S.L."/>
            <person name="Cerutti L."/>
            <person name="Lowe T."/>
            <person name="McCombie W.R."/>
            <person name="Paulsen I."/>
            <person name="Potashkin J."/>
            <person name="Shpakovski G.V."/>
            <person name="Ussery D."/>
            <person name="Barrell B.G."/>
            <person name="Nurse P."/>
        </authorList>
    </citation>
    <scope>NUCLEOTIDE SEQUENCE [LARGE SCALE GENOMIC DNA]</scope>
    <source>
        <strain>972 / ATCC 24843</strain>
    </source>
</reference>
<keyword id="KW-1185">Reference proteome</keyword>